<accession>Q82WI2</accession>
<proteinExistence type="inferred from homology"/>
<dbReference type="EC" id="4.2.1.20" evidence="1"/>
<dbReference type="EMBL" id="AL954747">
    <property type="protein sequence ID" value="CAD84604.1"/>
    <property type="molecule type" value="Genomic_DNA"/>
</dbReference>
<dbReference type="SMR" id="Q82WI2"/>
<dbReference type="STRING" id="228410.NE0693"/>
<dbReference type="KEGG" id="neu:NE0693"/>
<dbReference type="eggNOG" id="COG0133">
    <property type="taxonomic scope" value="Bacteria"/>
</dbReference>
<dbReference type="HOGENOM" id="CLU_016734_3_1_4"/>
<dbReference type="OrthoDB" id="9766131at2"/>
<dbReference type="PhylomeDB" id="Q82WI2"/>
<dbReference type="UniPathway" id="UPA00035">
    <property type="reaction ID" value="UER00044"/>
</dbReference>
<dbReference type="Proteomes" id="UP000001416">
    <property type="component" value="Chromosome"/>
</dbReference>
<dbReference type="GO" id="GO:0005737">
    <property type="term" value="C:cytoplasm"/>
    <property type="evidence" value="ECO:0007669"/>
    <property type="project" value="TreeGrafter"/>
</dbReference>
<dbReference type="GO" id="GO:0004834">
    <property type="term" value="F:tryptophan synthase activity"/>
    <property type="evidence" value="ECO:0007669"/>
    <property type="project" value="UniProtKB-UniRule"/>
</dbReference>
<dbReference type="CDD" id="cd06446">
    <property type="entry name" value="Trp-synth_B"/>
    <property type="match status" value="1"/>
</dbReference>
<dbReference type="FunFam" id="3.40.50.1100:FF:000001">
    <property type="entry name" value="Tryptophan synthase beta chain"/>
    <property type="match status" value="1"/>
</dbReference>
<dbReference type="FunFam" id="3.40.50.1100:FF:000004">
    <property type="entry name" value="Tryptophan synthase beta chain"/>
    <property type="match status" value="1"/>
</dbReference>
<dbReference type="Gene3D" id="3.40.50.1100">
    <property type="match status" value="2"/>
</dbReference>
<dbReference type="HAMAP" id="MF_00133">
    <property type="entry name" value="Trp_synth_beta"/>
    <property type="match status" value="1"/>
</dbReference>
<dbReference type="InterPro" id="IPR006653">
    <property type="entry name" value="Trp_synth_b_CS"/>
</dbReference>
<dbReference type="InterPro" id="IPR006654">
    <property type="entry name" value="Trp_synth_beta"/>
</dbReference>
<dbReference type="InterPro" id="IPR023026">
    <property type="entry name" value="Trp_synth_beta/beta-like"/>
</dbReference>
<dbReference type="InterPro" id="IPR001926">
    <property type="entry name" value="TrpB-like_PALP"/>
</dbReference>
<dbReference type="InterPro" id="IPR036052">
    <property type="entry name" value="TrpB-like_PALP_sf"/>
</dbReference>
<dbReference type="NCBIfam" id="TIGR00263">
    <property type="entry name" value="trpB"/>
    <property type="match status" value="1"/>
</dbReference>
<dbReference type="PANTHER" id="PTHR48077:SF3">
    <property type="entry name" value="TRYPTOPHAN SYNTHASE"/>
    <property type="match status" value="1"/>
</dbReference>
<dbReference type="PANTHER" id="PTHR48077">
    <property type="entry name" value="TRYPTOPHAN SYNTHASE-RELATED"/>
    <property type="match status" value="1"/>
</dbReference>
<dbReference type="Pfam" id="PF00291">
    <property type="entry name" value="PALP"/>
    <property type="match status" value="1"/>
</dbReference>
<dbReference type="PIRSF" id="PIRSF001413">
    <property type="entry name" value="Trp_syn_beta"/>
    <property type="match status" value="1"/>
</dbReference>
<dbReference type="SUPFAM" id="SSF53686">
    <property type="entry name" value="Tryptophan synthase beta subunit-like PLP-dependent enzymes"/>
    <property type="match status" value="1"/>
</dbReference>
<dbReference type="PROSITE" id="PS00168">
    <property type="entry name" value="TRP_SYNTHASE_BETA"/>
    <property type="match status" value="1"/>
</dbReference>
<feature type="chain" id="PRO_0000098974" description="Tryptophan synthase beta chain">
    <location>
        <begin position="1"/>
        <end position="397"/>
    </location>
</feature>
<feature type="modified residue" description="N6-(pyridoxal phosphate)lysine" evidence="1">
    <location>
        <position position="90"/>
    </location>
</feature>
<name>TRPB_NITEU</name>
<reference key="1">
    <citation type="journal article" date="2003" name="J. Bacteriol.">
        <title>Complete genome sequence of the ammonia-oxidizing bacterium and obligate chemolithoautotroph Nitrosomonas europaea.</title>
        <authorList>
            <person name="Chain P."/>
            <person name="Lamerdin J.E."/>
            <person name="Larimer F.W."/>
            <person name="Regala W."/>
            <person name="Lao V."/>
            <person name="Land M.L."/>
            <person name="Hauser L."/>
            <person name="Hooper A.B."/>
            <person name="Klotz M.G."/>
            <person name="Norton J."/>
            <person name="Sayavedra-Soto L.A."/>
            <person name="Arciero D.M."/>
            <person name="Hommes N.G."/>
            <person name="Whittaker M.M."/>
            <person name="Arp D.J."/>
        </authorList>
    </citation>
    <scope>NUCLEOTIDE SEQUENCE [LARGE SCALE GENOMIC DNA]</scope>
    <source>
        <strain>ATCC 19718 / CIP 103999 / KCTC 2705 / NBRC 14298</strain>
    </source>
</reference>
<gene>
    <name evidence="1" type="primary">trpB</name>
    <name type="ordered locus">NE0693</name>
</gene>
<protein>
    <recommendedName>
        <fullName evidence="1">Tryptophan synthase beta chain</fullName>
        <ecNumber evidence="1">4.2.1.20</ecNumber>
    </recommendedName>
</protein>
<comment type="function">
    <text evidence="1">The beta subunit is responsible for the synthesis of L-tryptophan from indole and L-serine.</text>
</comment>
<comment type="catalytic activity">
    <reaction evidence="1">
        <text>(1S,2R)-1-C-(indol-3-yl)glycerol 3-phosphate + L-serine = D-glyceraldehyde 3-phosphate + L-tryptophan + H2O</text>
        <dbReference type="Rhea" id="RHEA:10532"/>
        <dbReference type="ChEBI" id="CHEBI:15377"/>
        <dbReference type="ChEBI" id="CHEBI:33384"/>
        <dbReference type="ChEBI" id="CHEBI:57912"/>
        <dbReference type="ChEBI" id="CHEBI:58866"/>
        <dbReference type="ChEBI" id="CHEBI:59776"/>
        <dbReference type="EC" id="4.2.1.20"/>
    </reaction>
</comment>
<comment type="cofactor">
    <cofactor evidence="1">
        <name>pyridoxal 5'-phosphate</name>
        <dbReference type="ChEBI" id="CHEBI:597326"/>
    </cofactor>
</comment>
<comment type="pathway">
    <text evidence="1">Amino-acid biosynthesis; L-tryptophan biosynthesis; L-tryptophan from chorismate: step 5/5.</text>
</comment>
<comment type="subunit">
    <text evidence="1">Tetramer of two alpha and two beta chains.</text>
</comment>
<comment type="similarity">
    <text evidence="1">Belongs to the TrpB family.</text>
</comment>
<evidence type="ECO:0000255" key="1">
    <source>
        <dbReference type="HAMAP-Rule" id="MF_00133"/>
    </source>
</evidence>
<keyword id="KW-0028">Amino-acid biosynthesis</keyword>
<keyword id="KW-0057">Aromatic amino acid biosynthesis</keyword>
<keyword id="KW-0456">Lyase</keyword>
<keyword id="KW-0663">Pyridoxal phosphate</keyword>
<keyword id="KW-1185">Reference proteome</keyword>
<keyword id="KW-0822">Tryptophan biosynthesis</keyword>
<organism>
    <name type="scientific">Nitrosomonas europaea (strain ATCC 19718 / CIP 103999 / KCTC 2705 / NBRC 14298)</name>
    <dbReference type="NCBI Taxonomy" id="228410"/>
    <lineage>
        <taxon>Bacteria</taxon>
        <taxon>Pseudomonadati</taxon>
        <taxon>Pseudomonadota</taxon>
        <taxon>Betaproteobacteria</taxon>
        <taxon>Nitrosomonadales</taxon>
        <taxon>Nitrosomonadaceae</taxon>
        <taxon>Nitrosomonas</taxon>
    </lineage>
</organism>
<sequence length="397" mass="43399">MYDLPDKRGHFGPYGGTFVAETLISALDELCKQYEYYRDDAEFQAEFFHELKHYVGRPSPIYHAKRWSEHLGGAQILLKREDLNHTGAHKVNNTVGQALLARRMGKGRIIAETGAGQHGVASATVAARYGMECVVYMGSEDVKRQATNVYRMKLLGATVIPVDSGSCTLKDALNEAMRDWVTNVSNTYYIIGTVAGPHPYPMMVRDFQAIIGNEARQQMREEYGRQPDALIACVGGGSNAIGLFYPYIDEENVRMIGVEAAGKGIDTHEHAATLVTGRPGVLHGNRTYLIQDENGQIIETHSISAGLDYPGVGPEHAWLKDCGRAEYVAVTDDEALAAFHALCRFEGIIPALESSHALAYAAKLAPTLNKDQLLLVNLSGRGDKDMATVAQQSGISL</sequence>